<keyword id="KW-0378">Hydrolase</keyword>
<keyword id="KW-0662">Pyridine nucleotide biosynthesis</keyword>
<keyword id="KW-0663">Pyridoxal phosphate</keyword>
<name>KYNU_BURP1</name>
<dbReference type="EC" id="3.7.1.3" evidence="1"/>
<dbReference type="EMBL" id="CP000124">
    <property type="protein sequence ID" value="ABA49240.1"/>
    <property type="molecule type" value="Genomic_DNA"/>
</dbReference>
<dbReference type="RefSeq" id="WP_004522648.1">
    <property type="nucleotide sequence ID" value="NC_007434.1"/>
</dbReference>
<dbReference type="SMR" id="Q3JVD7"/>
<dbReference type="EnsemblBacteria" id="ABA49240">
    <property type="protein sequence ID" value="ABA49240"/>
    <property type="gene ID" value="BURPS1710b_1054"/>
</dbReference>
<dbReference type="GeneID" id="93059353"/>
<dbReference type="KEGG" id="bpm:BURPS1710b_1054"/>
<dbReference type="HOGENOM" id="CLU_003433_4_1_4"/>
<dbReference type="UniPathway" id="UPA00253">
    <property type="reaction ID" value="UER00329"/>
</dbReference>
<dbReference type="UniPathway" id="UPA00334">
    <property type="reaction ID" value="UER00455"/>
</dbReference>
<dbReference type="Proteomes" id="UP000002700">
    <property type="component" value="Chromosome I"/>
</dbReference>
<dbReference type="GO" id="GO:0005737">
    <property type="term" value="C:cytoplasm"/>
    <property type="evidence" value="ECO:0007669"/>
    <property type="project" value="InterPro"/>
</dbReference>
<dbReference type="GO" id="GO:0030429">
    <property type="term" value="F:kynureninase activity"/>
    <property type="evidence" value="ECO:0007669"/>
    <property type="project" value="UniProtKB-UniRule"/>
</dbReference>
<dbReference type="GO" id="GO:0030170">
    <property type="term" value="F:pyridoxal phosphate binding"/>
    <property type="evidence" value="ECO:0007669"/>
    <property type="project" value="UniProtKB-UniRule"/>
</dbReference>
<dbReference type="GO" id="GO:0043420">
    <property type="term" value="P:anthranilate metabolic process"/>
    <property type="evidence" value="ECO:0007669"/>
    <property type="project" value="TreeGrafter"/>
</dbReference>
<dbReference type="GO" id="GO:0097053">
    <property type="term" value="P:L-kynurenine catabolic process"/>
    <property type="evidence" value="ECO:0007669"/>
    <property type="project" value="UniProtKB-UniRule"/>
</dbReference>
<dbReference type="GO" id="GO:0019441">
    <property type="term" value="P:L-tryptophan catabolic process to kynurenine"/>
    <property type="evidence" value="ECO:0007669"/>
    <property type="project" value="TreeGrafter"/>
</dbReference>
<dbReference type="GO" id="GO:0009435">
    <property type="term" value="P:NAD biosynthetic process"/>
    <property type="evidence" value="ECO:0007669"/>
    <property type="project" value="UniProtKB-UniPathway"/>
</dbReference>
<dbReference type="GO" id="GO:0019805">
    <property type="term" value="P:quinolinate biosynthetic process"/>
    <property type="evidence" value="ECO:0007669"/>
    <property type="project" value="UniProtKB-UniRule"/>
</dbReference>
<dbReference type="FunFam" id="3.40.640.10:FF:000107">
    <property type="entry name" value="Kynureninase"/>
    <property type="match status" value="1"/>
</dbReference>
<dbReference type="Gene3D" id="3.90.1150.10">
    <property type="entry name" value="Aspartate Aminotransferase, domain 1"/>
    <property type="match status" value="1"/>
</dbReference>
<dbReference type="Gene3D" id="3.40.640.10">
    <property type="entry name" value="Type I PLP-dependent aspartate aminotransferase-like (Major domain)"/>
    <property type="match status" value="1"/>
</dbReference>
<dbReference type="HAMAP" id="MF_01970">
    <property type="entry name" value="Kynureninase"/>
    <property type="match status" value="1"/>
</dbReference>
<dbReference type="InterPro" id="IPR010111">
    <property type="entry name" value="Kynureninase"/>
</dbReference>
<dbReference type="InterPro" id="IPR015424">
    <property type="entry name" value="PyrdxlP-dep_Trfase"/>
</dbReference>
<dbReference type="InterPro" id="IPR015421">
    <property type="entry name" value="PyrdxlP-dep_Trfase_major"/>
</dbReference>
<dbReference type="InterPro" id="IPR015422">
    <property type="entry name" value="PyrdxlP-dep_Trfase_small"/>
</dbReference>
<dbReference type="NCBIfam" id="TIGR01814">
    <property type="entry name" value="kynureninase"/>
    <property type="match status" value="1"/>
</dbReference>
<dbReference type="PANTHER" id="PTHR14084">
    <property type="entry name" value="KYNURENINASE"/>
    <property type="match status" value="1"/>
</dbReference>
<dbReference type="PANTHER" id="PTHR14084:SF0">
    <property type="entry name" value="KYNURENINASE"/>
    <property type="match status" value="1"/>
</dbReference>
<dbReference type="Pfam" id="PF22580">
    <property type="entry name" value="KYNU_C"/>
    <property type="match status" value="1"/>
</dbReference>
<dbReference type="PIRSF" id="PIRSF038800">
    <property type="entry name" value="KYNU"/>
    <property type="match status" value="1"/>
</dbReference>
<dbReference type="SUPFAM" id="SSF53383">
    <property type="entry name" value="PLP-dependent transferases"/>
    <property type="match status" value="1"/>
</dbReference>
<sequence>MKTREEALALDRDDPLAPLREQFALPAGVIYLDGNSLGAQPRAAAARAQQVIGAEWGEGLIRSWNTAGWFALPRRLGDRLAPLIGAADGEVAITDTISINLFKLLAAMLRHQARHAPKRRVIVSERSNFPTDLYIAQGLIAQLDRDYELRLIDDPADLPDALDDETAVAMITHVNYRTGYMHDMPSVTQTVRQAGALMLWDLAHSAGAVPVDLNGALADGAVGCTYKYLNGGPGSPAFVWVPKRHQRAFEQPLSGWWGHRAPFAMQPAFEPDPGIARFLCGTQPIVSMSMVECGLDVFAQTDMHAIRRKSLALTDAFVALVESRCAGQPLKLVTPRAHHQRGSQASFEHPHGYEVMQALIARGVIGDYREPRILRFGFTPLYTRFVDVWDAVETLRDILDTEAWRAPEFATRAAVT</sequence>
<gene>
    <name evidence="1" type="primary">kynU</name>
    <name type="ordered locus">BURPS1710b_1054</name>
</gene>
<reference key="1">
    <citation type="journal article" date="2010" name="Genome Biol. Evol.">
        <title>Continuing evolution of Burkholderia mallei through genome reduction and large-scale rearrangements.</title>
        <authorList>
            <person name="Losada L."/>
            <person name="Ronning C.M."/>
            <person name="DeShazer D."/>
            <person name="Woods D."/>
            <person name="Fedorova N."/>
            <person name="Kim H.S."/>
            <person name="Shabalina S.A."/>
            <person name="Pearson T.R."/>
            <person name="Brinkac L."/>
            <person name="Tan P."/>
            <person name="Nandi T."/>
            <person name="Crabtree J."/>
            <person name="Badger J."/>
            <person name="Beckstrom-Sternberg S."/>
            <person name="Saqib M."/>
            <person name="Schutzer S.E."/>
            <person name="Keim P."/>
            <person name="Nierman W.C."/>
        </authorList>
    </citation>
    <scope>NUCLEOTIDE SEQUENCE [LARGE SCALE GENOMIC DNA]</scope>
    <source>
        <strain>1710b</strain>
    </source>
</reference>
<evidence type="ECO:0000255" key="1">
    <source>
        <dbReference type="HAMAP-Rule" id="MF_01970"/>
    </source>
</evidence>
<organism>
    <name type="scientific">Burkholderia pseudomallei (strain 1710b)</name>
    <dbReference type="NCBI Taxonomy" id="320372"/>
    <lineage>
        <taxon>Bacteria</taxon>
        <taxon>Pseudomonadati</taxon>
        <taxon>Pseudomonadota</taxon>
        <taxon>Betaproteobacteria</taxon>
        <taxon>Burkholderiales</taxon>
        <taxon>Burkholderiaceae</taxon>
        <taxon>Burkholderia</taxon>
        <taxon>pseudomallei group</taxon>
    </lineage>
</organism>
<proteinExistence type="inferred from homology"/>
<feature type="chain" id="PRO_0000357000" description="Kynureninase">
    <location>
        <begin position="1"/>
        <end position="416"/>
    </location>
</feature>
<feature type="binding site" evidence="1">
    <location>
        <position position="97"/>
    </location>
    <ligand>
        <name>pyridoxal 5'-phosphate</name>
        <dbReference type="ChEBI" id="CHEBI:597326"/>
    </ligand>
</feature>
<feature type="binding site" evidence="1">
    <location>
        <position position="98"/>
    </location>
    <ligand>
        <name>pyridoxal 5'-phosphate</name>
        <dbReference type="ChEBI" id="CHEBI:597326"/>
    </ligand>
</feature>
<feature type="binding site" evidence="1">
    <location>
        <begin position="129"/>
        <end position="132"/>
    </location>
    <ligand>
        <name>pyridoxal 5'-phosphate</name>
        <dbReference type="ChEBI" id="CHEBI:597326"/>
    </ligand>
</feature>
<feature type="binding site" evidence="1">
    <location>
        <position position="172"/>
    </location>
    <ligand>
        <name>pyridoxal 5'-phosphate</name>
        <dbReference type="ChEBI" id="CHEBI:597326"/>
    </ligand>
</feature>
<feature type="binding site" evidence="1">
    <location>
        <position position="201"/>
    </location>
    <ligand>
        <name>pyridoxal 5'-phosphate</name>
        <dbReference type="ChEBI" id="CHEBI:597326"/>
    </ligand>
</feature>
<feature type="binding site" evidence="1">
    <location>
        <position position="204"/>
    </location>
    <ligand>
        <name>pyridoxal 5'-phosphate</name>
        <dbReference type="ChEBI" id="CHEBI:597326"/>
    </ligand>
</feature>
<feature type="binding site" evidence="1">
    <location>
        <position position="226"/>
    </location>
    <ligand>
        <name>pyridoxal 5'-phosphate</name>
        <dbReference type="ChEBI" id="CHEBI:597326"/>
    </ligand>
</feature>
<feature type="binding site" evidence="1">
    <location>
        <position position="256"/>
    </location>
    <ligand>
        <name>pyridoxal 5'-phosphate</name>
        <dbReference type="ChEBI" id="CHEBI:597326"/>
    </ligand>
</feature>
<feature type="binding site" evidence="1">
    <location>
        <position position="282"/>
    </location>
    <ligand>
        <name>pyridoxal 5'-phosphate</name>
        <dbReference type="ChEBI" id="CHEBI:597326"/>
    </ligand>
</feature>
<feature type="modified residue" description="N6-(pyridoxal phosphate)lysine" evidence="1">
    <location>
        <position position="227"/>
    </location>
</feature>
<protein>
    <recommendedName>
        <fullName evidence="1">Kynureninase</fullName>
        <ecNumber evidence="1">3.7.1.3</ecNumber>
    </recommendedName>
    <alternativeName>
        <fullName evidence="1">L-kynurenine hydrolase</fullName>
    </alternativeName>
</protein>
<accession>Q3JVD7</accession>
<comment type="function">
    <text evidence="1">Catalyzes the cleavage of L-kynurenine (L-Kyn) and L-3-hydroxykynurenine (L-3OHKyn) into anthranilic acid (AA) and 3-hydroxyanthranilic acid (3-OHAA), respectively.</text>
</comment>
<comment type="catalytic activity">
    <reaction evidence="1">
        <text>L-kynurenine + H2O = anthranilate + L-alanine + H(+)</text>
        <dbReference type="Rhea" id="RHEA:16813"/>
        <dbReference type="ChEBI" id="CHEBI:15377"/>
        <dbReference type="ChEBI" id="CHEBI:15378"/>
        <dbReference type="ChEBI" id="CHEBI:16567"/>
        <dbReference type="ChEBI" id="CHEBI:57959"/>
        <dbReference type="ChEBI" id="CHEBI:57972"/>
        <dbReference type="EC" id="3.7.1.3"/>
    </reaction>
</comment>
<comment type="catalytic activity">
    <reaction evidence="1">
        <text>3-hydroxy-L-kynurenine + H2O = 3-hydroxyanthranilate + L-alanine + H(+)</text>
        <dbReference type="Rhea" id="RHEA:25143"/>
        <dbReference type="ChEBI" id="CHEBI:15377"/>
        <dbReference type="ChEBI" id="CHEBI:15378"/>
        <dbReference type="ChEBI" id="CHEBI:36559"/>
        <dbReference type="ChEBI" id="CHEBI:57972"/>
        <dbReference type="ChEBI" id="CHEBI:58125"/>
        <dbReference type="EC" id="3.7.1.3"/>
    </reaction>
</comment>
<comment type="cofactor">
    <cofactor evidence="1">
        <name>pyridoxal 5'-phosphate</name>
        <dbReference type="ChEBI" id="CHEBI:597326"/>
    </cofactor>
</comment>
<comment type="pathway">
    <text evidence="1">Amino-acid degradation; L-kynurenine degradation; L-alanine and anthranilate from L-kynurenine: step 1/1.</text>
</comment>
<comment type="pathway">
    <text evidence="1">Cofactor biosynthesis; NAD(+) biosynthesis; quinolinate from L-kynurenine: step 2/3.</text>
</comment>
<comment type="subunit">
    <text evidence="1">Homodimer.</text>
</comment>
<comment type="similarity">
    <text evidence="1">Belongs to the kynureninase family.</text>
</comment>